<comment type="function">
    <text evidence="2 3 5 7 9 12">Oxysterol-binding protein that mediates feedback control of cholesterol synthesis by controlling both endoplasmic reticulum to Golgi transport of SCAP and degradation of HMGCR (PubMed:12242332, PubMed:16606821, PubMed:32322062). Acts as a negative regulator of cholesterol biosynthesis by mediating the retention of the SCAP-SREBP complex in the endoplasmic reticulum, thereby blocking the processing of sterol regulatory element-binding proteins (SREBPs) SREBF1/SREBP1 and SREBF2/SREBP2 (PubMed:32322062). Binds oxysterol, including 22-hydroxycholesterol, 24-hydroxycholesterol, 25-hydroxycholesterol and 27-hydroxycholesterol, regulating interaction with SCAP and retention of the SCAP-SREBP complex in the endoplasmic reticulum (PubMed:17428920, PubMed:26160948, PubMed:32322062). In presence of oxysterol, interacts with SCAP, retaining the SCAP-SREBP complex in the endoplasmic reticulum, thereby preventing SCAP from escorting SREBF1/SREBP1 and SREBF2/SREBP2 to the Golgi (PubMed:32322062). Sterol deprivation or phosphorylation by PCK1 reduce oxysterol-binding, disrupting the interaction between INSIG2 and SCAP, thereby promoting Golgi transport of the SCAP-SREBP complex, followed by processing and nuclear translocation of SREBF1/SREBP1 and SREBF2/SREBP2 (PubMed:32322062). Also regulates cholesterol synthesis by regulating degradation of HMGCR: initiates the sterol-mediated ubiquitin-mediated endoplasmic reticulum-associated degradation (ERAD) of HMGCR via recruitment of the reductase to the ubiquitin ligase RNF139 (PubMed:16606821, PubMed:22143767).</text>
</comment>
<comment type="subunit">
    <text evidence="2 5 6 7 9 10 12">Interacts with SCAP; interaction is direct and only takes place in the presence of sterols; it prevents interaction between SCAP and the coat protein complex II (COPII) (PubMed:12242332, PubMed:17428920, PubMed:26160948, PubMed:32322062). Associates with the SCAP-SREBP complex (composed of SCAP and SREBF1/SREBP1 or SREBF2/SREBP2); association is mediated via its interaction with SCAP and only takes place in the presence of sterols (PubMed:12242332, PubMed:32322062). Interacts with RNF139 (PubMed:20068067, PubMed:22143767). Interacts with RNF145 (PubMed:29374057).</text>
</comment>
<comment type="interaction">
    <interactant intactId="EBI-8503746">
        <id>Q9Y5U4</id>
    </interactant>
    <interactant intactId="EBI-7131019">
        <id>Q8TB40</id>
        <label>ABHD4</label>
    </interactant>
    <organismsDiffer>false</organismsDiffer>
    <experiments>3</experiments>
</comment>
<comment type="interaction">
    <interactant intactId="EBI-8503746">
        <id>Q9Y5U4</id>
    </interactant>
    <interactant intactId="EBI-12701138">
        <id>P41181</id>
        <label>AQP2</label>
    </interactant>
    <organismsDiffer>false</organismsDiffer>
    <experiments>3</experiments>
</comment>
<comment type="interaction">
    <interactant intactId="EBI-8503746">
        <id>Q9Y5U4</id>
    </interactant>
    <interactant intactId="EBI-13059134">
        <id>Q13520</id>
        <label>AQP6</label>
    </interactant>
    <organismsDiffer>false</organismsDiffer>
    <experiments>3</experiments>
</comment>
<comment type="interaction">
    <interactant intactId="EBI-8503746">
        <id>Q9Y5U4</id>
    </interactant>
    <interactant intactId="EBI-3904417">
        <id>Q99437</id>
        <label>ATP6V0B</label>
    </interactant>
    <organismsDiffer>false</organismsDiffer>
    <experiments>3</experiments>
</comment>
<comment type="interaction">
    <interactant intactId="EBI-8503746">
        <id>Q9Y5U4</id>
    </interactant>
    <interactant intactId="EBI-700794">
        <id>Q13323</id>
        <label>BIK</label>
    </interactant>
    <organismsDiffer>false</organismsDiffer>
    <experiments>3</experiments>
</comment>
<comment type="interaction">
    <interactant intactId="EBI-8503746">
        <id>Q9Y5U4</id>
    </interactant>
    <interactant intactId="EBI-525714">
        <id>P25942</id>
        <label>CD40</label>
    </interactant>
    <organismsDiffer>false</organismsDiffer>
    <experiments>3</experiments>
</comment>
<comment type="interaction">
    <interactant intactId="EBI-8503746">
        <id>Q9Y5U4</id>
    </interactant>
    <interactant intactId="EBI-7797864">
        <id>P11912</id>
        <label>CD79A</label>
    </interactant>
    <organismsDiffer>false</organismsDiffer>
    <experiments>3</experiments>
</comment>
<comment type="interaction">
    <interactant intactId="EBI-8503746">
        <id>Q9Y5U4</id>
    </interactant>
    <interactant intactId="EBI-18013275">
        <id>Q7Z7G2</id>
        <label>CPLX4</label>
    </interactant>
    <organismsDiffer>false</organismsDiffer>
    <experiments>3</experiments>
</comment>
<comment type="interaction">
    <interactant intactId="EBI-8503746">
        <id>Q9Y5U4</id>
    </interactant>
    <interactant intactId="EBI-6942903">
        <id>Q96BA8</id>
        <label>CREB3L1</label>
    </interactant>
    <organismsDiffer>false</organismsDiffer>
    <experiments>3</experiments>
</comment>
<comment type="interaction">
    <interactant intactId="EBI-8503746">
        <id>Q9Y5U4</id>
    </interactant>
    <interactant intactId="EBI-2680384">
        <id>Q9BQA9</id>
        <label>CYBC1</label>
    </interactant>
    <organismsDiffer>false</organismsDiffer>
    <experiments>3</experiments>
</comment>
<comment type="interaction">
    <interactant intactId="EBI-8503746">
        <id>Q9Y5U4</id>
    </interactant>
    <interactant intactId="EBI-3915253">
        <id>Q15125</id>
        <label>EBP</label>
    </interactant>
    <organismsDiffer>false</organismsDiffer>
    <experiments>3</experiments>
</comment>
<comment type="interaction">
    <interactant intactId="EBI-8503746">
        <id>Q9Y5U4</id>
    </interactant>
    <interactant intactId="EBI-18304435">
        <id>Q5JX71</id>
        <label>FAM209A</label>
    </interactant>
    <organismsDiffer>false</organismsDiffer>
    <experiments>3</experiments>
</comment>
<comment type="interaction">
    <interactant intactId="EBI-8503746">
        <id>Q9Y5U4</id>
    </interactant>
    <interactant intactId="EBI-17458373">
        <id>P48165</id>
        <label>GJA8</label>
    </interactant>
    <organismsDiffer>false</organismsDiffer>
    <experiments>3</experiments>
</comment>
<comment type="interaction">
    <interactant intactId="EBI-8503746">
        <id>Q9Y5U4</id>
    </interactant>
    <interactant intactId="EBI-712073">
        <id>Q8NBJ4</id>
        <label>GOLM1</label>
    </interactant>
    <organismsDiffer>false</organismsDiffer>
    <experiments>3</experiments>
</comment>
<comment type="interaction">
    <interactant intactId="EBI-8503746">
        <id>Q9Y5U4</id>
    </interactant>
    <interactant intactId="EBI-13345167">
        <id>Q8TDT2</id>
        <label>GPR152</label>
    </interactant>
    <organismsDiffer>false</organismsDiffer>
    <experiments>3</experiments>
</comment>
<comment type="interaction">
    <interactant intactId="EBI-8503746">
        <id>Q9Y5U4</id>
    </interactant>
    <interactant intactId="EBI-2927498">
        <id>O60883</id>
        <label>GPR37L1</label>
    </interactant>
    <organismsDiffer>false</organismsDiffer>
    <experiments>3</experiments>
</comment>
<comment type="interaction">
    <interactant intactId="EBI-8503746">
        <id>Q9Y5U4</id>
    </interactant>
    <interactant intactId="EBI-11721746">
        <id>Q8TED1</id>
        <label>GPX8</label>
    </interactant>
    <organismsDiffer>false</organismsDiffer>
    <experiments>3</experiments>
</comment>
<comment type="interaction">
    <interactant intactId="EBI-8503746">
        <id>Q9Y5U4</id>
    </interactant>
    <interactant intactId="EBI-18053395">
        <id>Q7Z5P4</id>
        <label>HSD17B13</label>
    </interactant>
    <organismsDiffer>false</organismsDiffer>
    <experiments>3</experiments>
</comment>
<comment type="interaction">
    <interactant intactId="EBI-8503746">
        <id>Q9Y5U4</id>
    </interactant>
    <interactant intactId="EBI-3905457">
        <id>P38484</id>
        <label>IFNGR2</label>
    </interactant>
    <organismsDiffer>false</organismsDiffer>
    <experiments>3</experiments>
</comment>
<comment type="interaction">
    <interactant intactId="EBI-8503746">
        <id>Q9Y5U4</id>
    </interactant>
    <interactant intactId="EBI-8632435">
        <id>P43628</id>
        <label>KIR2DL3</label>
    </interactant>
    <organismsDiffer>false</organismsDiffer>
    <experiments>3</experiments>
</comment>
<comment type="interaction">
    <interactant intactId="EBI-8503746">
        <id>Q9Y5U4</id>
    </interactant>
    <interactant intactId="EBI-2865663">
        <id>Q13571</id>
        <label>LAPTM5</label>
    </interactant>
    <organismsDiffer>false</organismsDiffer>
    <experiments>3</experiments>
</comment>
<comment type="interaction">
    <interactant intactId="EBI-8503746">
        <id>Q9Y5U4</id>
    </interactant>
    <interactant intactId="EBI-2820517">
        <id>Q8TAF8</id>
        <label>LHFPL5</label>
    </interactant>
    <organismsDiffer>false</organismsDiffer>
    <experiments>3</experiments>
</comment>
<comment type="interaction">
    <interactant intactId="EBI-8503746">
        <id>Q9Y5U4</id>
    </interactant>
    <interactant intactId="EBI-6163737">
        <id>Q8N4V1</id>
        <label>MMGT1</label>
    </interactant>
    <organismsDiffer>false</organismsDiffer>
    <experiments>3</experiments>
</comment>
<comment type="interaction">
    <interactant intactId="EBI-8503746">
        <id>Q9Y5U4</id>
    </interactant>
    <interactant intactId="EBI-17263240">
        <id>P15941-11</id>
        <label>MUC1</label>
    </interactant>
    <organismsDiffer>false</organismsDiffer>
    <experiments>3</experiments>
</comment>
<comment type="interaction">
    <interactant intactId="EBI-8503746">
        <id>Q9Y5U4</id>
    </interactant>
    <interactant intactId="EBI-10969203">
        <id>O14524-2</id>
        <label>NEMP1</label>
    </interactant>
    <organismsDiffer>false</organismsDiffer>
    <experiments>3</experiments>
</comment>
<comment type="interaction">
    <interactant intactId="EBI-8503746">
        <id>Q9Y5U4</id>
    </interactant>
    <interactant intactId="EBI-476182">
        <id>P16471</id>
        <label>PRLR</label>
    </interactant>
    <organismsDiffer>false</organismsDiffer>
    <experiments>3</experiments>
</comment>
<comment type="interaction">
    <interactant intactId="EBI-8503746">
        <id>Q9Y5U4</id>
    </interactant>
    <interactant intactId="EBI-3919694">
        <id>P15151</id>
        <label>PVR</label>
    </interactant>
    <organismsDiffer>false</organismsDiffer>
    <experiments>3</experiments>
</comment>
<comment type="interaction">
    <interactant intactId="EBI-8503746">
        <id>Q9Y5U4</id>
    </interactant>
    <interactant intactId="EBI-348482">
        <id>Q99942</id>
        <label>RNF5</label>
    </interactant>
    <organismsDiffer>false</organismsDiffer>
    <experiments>6</experiments>
</comment>
<comment type="interaction">
    <interactant intactId="EBI-8503746">
        <id>Q9Y5U4</id>
    </interactant>
    <interactant intactId="EBI-17247926">
        <id>Q9NY72</id>
        <label>SCN3B</label>
    </interactant>
    <organismsDiffer>false</organismsDiffer>
    <experiments>3</experiments>
</comment>
<comment type="interaction">
    <interactant intactId="EBI-8503746">
        <id>Q9Y5U4</id>
    </interactant>
    <interactant intactId="EBI-17858931">
        <id>Q8TF71</id>
        <label>SLC16A10</label>
    </interactant>
    <organismsDiffer>false</organismsDiffer>
    <experiments>3</experiments>
</comment>
<comment type="interaction">
    <interactant intactId="EBI-8503746">
        <id>Q9Y5U4</id>
    </interactant>
    <interactant intactId="EBI-448878">
        <id>Q13586</id>
        <label>STIM1</label>
    </interactant>
    <organismsDiffer>false</organismsDiffer>
    <experiments>3</experiments>
</comment>
<comment type="interaction">
    <interactant intactId="EBI-8503746">
        <id>Q9Y5U4</id>
    </interactant>
    <interactant intactId="EBI-8638294">
        <id>Q9NUH8</id>
        <label>TMEM14B</label>
    </interactant>
    <organismsDiffer>false</organismsDiffer>
    <experiments>3</experiments>
</comment>
<comment type="interaction">
    <interactant intactId="EBI-8503746">
        <id>Q9Y5U4</id>
    </interactant>
    <interactant intactId="EBI-10982110">
        <id>Q96Q45-2</id>
        <label>TMEM237</label>
    </interactant>
    <organismsDiffer>false</organismsDiffer>
    <experiments>4</experiments>
</comment>
<comment type="interaction">
    <interactant intactId="EBI-8503746">
        <id>Q9Y5U4</id>
    </interactant>
    <interactant intactId="EBI-3923061">
        <id>Q96B21</id>
        <label>TMEM45B</label>
    </interactant>
    <organismsDiffer>false</organismsDiffer>
    <experiments>3</experiments>
</comment>
<comment type="interaction">
    <interactant intactId="EBI-8503746">
        <id>Q9Y5U4</id>
    </interactant>
    <interactant intactId="EBI-18178701">
        <id>Q4KMG9</id>
        <label>TMEM52B</label>
    </interactant>
    <organismsDiffer>false</organismsDiffer>
    <experiments>3</experiments>
</comment>
<comment type="interaction">
    <interactant intactId="EBI-8503746">
        <id>Q9Y5U4</id>
    </interactant>
    <interactant intactId="EBI-6447886">
        <id>Q9Y320</id>
        <label>TMX2</label>
    </interactant>
    <organismsDiffer>false</organismsDiffer>
    <experiments>3</experiments>
</comment>
<comment type="interaction">
    <interactant intactId="EBI-8503746">
        <id>Q9Y5U4</id>
    </interactant>
    <interactant intactId="EBI-1055364">
        <id>Q3ZAQ7</id>
        <label>VMA21</label>
    </interactant>
    <organismsDiffer>false</organismsDiffer>
    <experiments>3</experiments>
</comment>
<comment type="subcellular location">
    <subcellularLocation>
        <location evidence="2 12">Endoplasmic reticulum membrane</location>
        <topology evidence="2">Multi-pass membrane protein</topology>
    </subcellularLocation>
</comment>
<comment type="domain">
    <text evidence="5 9">Binds oxysterols in a pocket within their transmembrane domains and interacts with SCAP via transmembrane domains 3 and 4.</text>
</comment>
<comment type="domain">
    <text evidence="8">The KxHxx motif mediates association with the coatomer complex.</text>
</comment>
<comment type="PTM">
    <text evidence="12">Phosphorylation at Ser-151 by PCK1 reduces binding to oxysterol, disrupting the interaction between INSIG2 and SCAP, thereby promoting nuclear translocation of SREBP proteins (SREBF1/SREBP1 or SREBF2/SREBP2) and subsequent transcription of downstream lipogenesis-related genes.</text>
</comment>
<comment type="PTM">
    <text evidence="11">Polyubiquitinated by AMFR/gp78 at Cys-215 in some tissues such as adipose tissues, undifferentiated myoblasts and liver, leading to its degradation (PubMed:31953408). In differentiated myotubes, Cys-215 oxidation prevents ubiquitination at the same site, resulting in protein stabilization (PubMed:31953408).</text>
</comment>
<comment type="PTM">
    <text evidence="11">Oxidized at Cys-215 in differentiated myotubes, preventing ubiquitination at the same site, and resulting in protein stabilization.</text>
</comment>
<comment type="similarity">
    <text evidence="14">Belongs to the INSIG family.</text>
</comment>
<comment type="caution">
    <text evidence="4 11">A study showed that INSIG2 is not ubiquitinated by AMFR/gp78 (PubMed:17043353). However, another paper showed that it is ubiquitinated on Cys-215, and that ubiquitination takes place in some tissues only and depends on the differentiation state (PubMed:31953408).</text>
</comment>
<comment type="sequence caution" evidence="14">
    <conflict type="frameshift">
        <sequence resource="EMBL-CDS" id="AAD43048"/>
    </conflict>
</comment>
<sequence length="225" mass="24778">MAEGETESPGPKKCGPYISSVTSQSVNLMIRGVVLFFIGVFLALVLNLLQIQRNVTLFPPDVIASIFSSAWWVPPCCGTASAVIGLLYPCIDRHLGEPHKFKREWSSVMRCVAVFVGINHASAKVDFDNNIQLSLTLAALSIGLWWTFDRSRSGFGLGVGIAFLATVVTQLLVYNGVYQYTSPDFLYVRSWLPCIFFAGGITMGNIGRQLAMYECKVIAEKSHQE</sequence>
<accession>Q9Y5U4</accession>
<accession>A8K5W8</accession>
<accession>Q8TBI8</accession>
<reference key="1">
    <citation type="journal article" date="2002" name="Proc. Natl. Acad. Sci. U.S.A.">
        <title>Insig-2, a second endoplasmic reticulum protein that binds SCAP and blocks export of sterol regulatory element-binding proteins.</title>
        <authorList>
            <person name="Yabe D."/>
            <person name="Brown M.S."/>
            <person name="Goldstein J.L."/>
        </authorList>
    </citation>
    <scope>NUCLEOTIDE SEQUENCE [MRNA]</scope>
    <scope>FUNCTION</scope>
    <scope>INTERACTION WITH THE SCAP-SREBP COMPLEX</scope>
    <scope>SUBCELLULAR LOCATION</scope>
    <source>
        <tissue>Hypothalamus</tissue>
    </source>
</reference>
<reference key="2">
    <citation type="submission" date="1999-02" db="EMBL/GenBank/DDBJ databases">
        <title>Homo sapiens insulin induced protein 2 mRNA.</title>
        <authorList>
            <person name="Bao Q."/>
            <person name="Song H."/>
            <person name="Huang Q."/>
            <person name="Dai M."/>
            <person name="Mao Y."/>
            <person name="Zhang Q."/>
            <person name="Guan Z."/>
            <person name="Luo M."/>
            <person name="Chen J."/>
            <person name="Hu R."/>
        </authorList>
    </citation>
    <scope>NUCLEOTIDE SEQUENCE [MRNA]</scope>
    <source>
        <tissue>Pituitary</tissue>
    </source>
</reference>
<reference key="3">
    <citation type="journal article" date="2004" name="Nat. Genet.">
        <title>Complete sequencing and characterization of 21,243 full-length human cDNAs.</title>
        <authorList>
            <person name="Ota T."/>
            <person name="Suzuki Y."/>
            <person name="Nishikawa T."/>
            <person name="Otsuki T."/>
            <person name="Sugiyama T."/>
            <person name="Irie R."/>
            <person name="Wakamatsu A."/>
            <person name="Hayashi K."/>
            <person name="Sato H."/>
            <person name="Nagai K."/>
            <person name="Kimura K."/>
            <person name="Makita H."/>
            <person name="Sekine M."/>
            <person name="Obayashi M."/>
            <person name="Nishi T."/>
            <person name="Shibahara T."/>
            <person name="Tanaka T."/>
            <person name="Ishii S."/>
            <person name="Yamamoto J."/>
            <person name="Saito K."/>
            <person name="Kawai Y."/>
            <person name="Isono Y."/>
            <person name="Nakamura Y."/>
            <person name="Nagahari K."/>
            <person name="Murakami K."/>
            <person name="Yasuda T."/>
            <person name="Iwayanagi T."/>
            <person name="Wagatsuma M."/>
            <person name="Shiratori A."/>
            <person name="Sudo H."/>
            <person name="Hosoiri T."/>
            <person name="Kaku Y."/>
            <person name="Kodaira H."/>
            <person name="Kondo H."/>
            <person name="Sugawara M."/>
            <person name="Takahashi M."/>
            <person name="Kanda K."/>
            <person name="Yokoi T."/>
            <person name="Furuya T."/>
            <person name="Kikkawa E."/>
            <person name="Omura Y."/>
            <person name="Abe K."/>
            <person name="Kamihara K."/>
            <person name="Katsuta N."/>
            <person name="Sato K."/>
            <person name="Tanikawa M."/>
            <person name="Yamazaki M."/>
            <person name="Ninomiya K."/>
            <person name="Ishibashi T."/>
            <person name="Yamashita H."/>
            <person name="Murakawa K."/>
            <person name="Fujimori K."/>
            <person name="Tanai H."/>
            <person name="Kimata M."/>
            <person name="Watanabe M."/>
            <person name="Hiraoka S."/>
            <person name="Chiba Y."/>
            <person name="Ishida S."/>
            <person name="Ono Y."/>
            <person name="Takiguchi S."/>
            <person name="Watanabe S."/>
            <person name="Yosida M."/>
            <person name="Hotuta T."/>
            <person name="Kusano J."/>
            <person name="Kanehori K."/>
            <person name="Takahashi-Fujii A."/>
            <person name="Hara H."/>
            <person name="Tanase T.-O."/>
            <person name="Nomura Y."/>
            <person name="Togiya S."/>
            <person name="Komai F."/>
            <person name="Hara R."/>
            <person name="Takeuchi K."/>
            <person name="Arita M."/>
            <person name="Imose N."/>
            <person name="Musashino K."/>
            <person name="Yuuki H."/>
            <person name="Oshima A."/>
            <person name="Sasaki N."/>
            <person name="Aotsuka S."/>
            <person name="Yoshikawa Y."/>
            <person name="Matsunawa H."/>
            <person name="Ichihara T."/>
            <person name="Shiohata N."/>
            <person name="Sano S."/>
            <person name="Moriya S."/>
            <person name="Momiyama H."/>
            <person name="Satoh N."/>
            <person name="Takami S."/>
            <person name="Terashima Y."/>
            <person name="Suzuki O."/>
            <person name="Nakagawa S."/>
            <person name="Senoh A."/>
            <person name="Mizoguchi H."/>
            <person name="Goto Y."/>
            <person name="Shimizu F."/>
            <person name="Wakebe H."/>
            <person name="Hishigaki H."/>
            <person name="Watanabe T."/>
            <person name="Sugiyama A."/>
            <person name="Takemoto M."/>
            <person name="Kawakami B."/>
            <person name="Yamazaki M."/>
            <person name="Watanabe K."/>
            <person name="Kumagai A."/>
            <person name="Itakura S."/>
            <person name="Fukuzumi Y."/>
            <person name="Fujimori Y."/>
            <person name="Komiyama M."/>
            <person name="Tashiro H."/>
            <person name="Tanigami A."/>
            <person name="Fujiwara T."/>
            <person name="Ono T."/>
            <person name="Yamada K."/>
            <person name="Fujii Y."/>
            <person name="Ozaki K."/>
            <person name="Hirao M."/>
            <person name="Ohmori Y."/>
            <person name="Kawabata A."/>
            <person name="Hikiji T."/>
            <person name="Kobatake N."/>
            <person name="Inagaki H."/>
            <person name="Ikema Y."/>
            <person name="Okamoto S."/>
            <person name="Okitani R."/>
            <person name="Kawakami T."/>
            <person name="Noguchi S."/>
            <person name="Itoh T."/>
            <person name="Shigeta K."/>
            <person name="Senba T."/>
            <person name="Matsumura K."/>
            <person name="Nakajima Y."/>
            <person name="Mizuno T."/>
            <person name="Morinaga M."/>
            <person name="Sasaki M."/>
            <person name="Togashi T."/>
            <person name="Oyama M."/>
            <person name="Hata H."/>
            <person name="Watanabe M."/>
            <person name="Komatsu T."/>
            <person name="Mizushima-Sugano J."/>
            <person name="Satoh T."/>
            <person name="Shirai Y."/>
            <person name="Takahashi Y."/>
            <person name="Nakagawa K."/>
            <person name="Okumura K."/>
            <person name="Nagase T."/>
            <person name="Nomura N."/>
            <person name="Kikuchi H."/>
            <person name="Masuho Y."/>
            <person name="Yamashita R."/>
            <person name="Nakai K."/>
            <person name="Yada T."/>
            <person name="Nakamura Y."/>
            <person name="Ohara O."/>
            <person name="Isogai T."/>
            <person name="Sugano S."/>
        </authorList>
    </citation>
    <scope>NUCLEOTIDE SEQUENCE [LARGE SCALE MRNA]</scope>
    <source>
        <tissue>Brain</tissue>
    </source>
</reference>
<reference key="4">
    <citation type="journal article" date="2005" name="Nature">
        <title>Generation and annotation of the DNA sequences of human chromosomes 2 and 4.</title>
        <authorList>
            <person name="Hillier L.W."/>
            <person name="Graves T.A."/>
            <person name="Fulton R.S."/>
            <person name="Fulton L.A."/>
            <person name="Pepin K.H."/>
            <person name="Minx P."/>
            <person name="Wagner-McPherson C."/>
            <person name="Layman D."/>
            <person name="Wylie K."/>
            <person name="Sekhon M."/>
            <person name="Becker M.C."/>
            <person name="Fewell G.A."/>
            <person name="Delehaunty K.D."/>
            <person name="Miner T.L."/>
            <person name="Nash W.E."/>
            <person name="Kremitzki C."/>
            <person name="Oddy L."/>
            <person name="Du H."/>
            <person name="Sun H."/>
            <person name="Bradshaw-Cordum H."/>
            <person name="Ali J."/>
            <person name="Carter J."/>
            <person name="Cordes M."/>
            <person name="Harris A."/>
            <person name="Isak A."/>
            <person name="van Brunt A."/>
            <person name="Nguyen C."/>
            <person name="Du F."/>
            <person name="Courtney L."/>
            <person name="Kalicki J."/>
            <person name="Ozersky P."/>
            <person name="Abbott S."/>
            <person name="Armstrong J."/>
            <person name="Belter E.A."/>
            <person name="Caruso L."/>
            <person name="Cedroni M."/>
            <person name="Cotton M."/>
            <person name="Davidson T."/>
            <person name="Desai A."/>
            <person name="Elliott G."/>
            <person name="Erb T."/>
            <person name="Fronick C."/>
            <person name="Gaige T."/>
            <person name="Haakenson W."/>
            <person name="Haglund K."/>
            <person name="Holmes A."/>
            <person name="Harkins R."/>
            <person name="Kim K."/>
            <person name="Kruchowski S.S."/>
            <person name="Strong C.M."/>
            <person name="Grewal N."/>
            <person name="Goyea E."/>
            <person name="Hou S."/>
            <person name="Levy A."/>
            <person name="Martinka S."/>
            <person name="Mead K."/>
            <person name="McLellan M.D."/>
            <person name="Meyer R."/>
            <person name="Randall-Maher J."/>
            <person name="Tomlinson C."/>
            <person name="Dauphin-Kohlberg S."/>
            <person name="Kozlowicz-Reilly A."/>
            <person name="Shah N."/>
            <person name="Swearengen-Shahid S."/>
            <person name="Snider J."/>
            <person name="Strong J.T."/>
            <person name="Thompson J."/>
            <person name="Yoakum M."/>
            <person name="Leonard S."/>
            <person name="Pearman C."/>
            <person name="Trani L."/>
            <person name="Radionenko M."/>
            <person name="Waligorski J.E."/>
            <person name="Wang C."/>
            <person name="Rock S.M."/>
            <person name="Tin-Wollam A.-M."/>
            <person name="Maupin R."/>
            <person name="Latreille P."/>
            <person name="Wendl M.C."/>
            <person name="Yang S.-P."/>
            <person name="Pohl C."/>
            <person name="Wallis J.W."/>
            <person name="Spieth J."/>
            <person name="Bieri T.A."/>
            <person name="Berkowicz N."/>
            <person name="Nelson J.O."/>
            <person name="Osborne J."/>
            <person name="Ding L."/>
            <person name="Meyer R."/>
            <person name="Sabo A."/>
            <person name="Shotland Y."/>
            <person name="Sinha P."/>
            <person name="Wohldmann P.E."/>
            <person name="Cook L.L."/>
            <person name="Hickenbotham M.T."/>
            <person name="Eldred J."/>
            <person name="Williams D."/>
            <person name="Jones T.A."/>
            <person name="She X."/>
            <person name="Ciccarelli F.D."/>
            <person name="Izaurralde E."/>
            <person name="Taylor J."/>
            <person name="Schmutz J."/>
            <person name="Myers R.M."/>
            <person name="Cox D.R."/>
            <person name="Huang X."/>
            <person name="McPherson J.D."/>
            <person name="Mardis E.R."/>
            <person name="Clifton S.W."/>
            <person name="Warren W.C."/>
            <person name="Chinwalla A.T."/>
            <person name="Eddy S.R."/>
            <person name="Marra M.A."/>
            <person name="Ovcharenko I."/>
            <person name="Furey T.S."/>
            <person name="Miller W."/>
            <person name="Eichler E.E."/>
            <person name="Bork P."/>
            <person name="Suyama M."/>
            <person name="Torrents D."/>
            <person name="Waterston R.H."/>
            <person name="Wilson R.K."/>
        </authorList>
    </citation>
    <scope>NUCLEOTIDE SEQUENCE [LARGE SCALE GENOMIC DNA]</scope>
</reference>
<reference key="5">
    <citation type="submission" date="2005-07" db="EMBL/GenBank/DDBJ databases">
        <authorList>
            <person name="Mural R.J."/>
            <person name="Istrail S."/>
            <person name="Sutton G.G."/>
            <person name="Florea L."/>
            <person name="Halpern A.L."/>
            <person name="Mobarry C.M."/>
            <person name="Lippert R."/>
            <person name="Walenz B."/>
            <person name="Shatkay H."/>
            <person name="Dew I."/>
            <person name="Miller J.R."/>
            <person name="Flanigan M.J."/>
            <person name="Edwards N.J."/>
            <person name="Bolanos R."/>
            <person name="Fasulo D."/>
            <person name="Halldorsson B.V."/>
            <person name="Hannenhalli S."/>
            <person name="Turner R."/>
            <person name="Yooseph S."/>
            <person name="Lu F."/>
            <person name="Nusskern D.R."/>
            <person name="Shue B.C."/>
            <person name="Zheng X.H."/>
            <person name="Zhong F."/>
            <person name="Delcher A.L."/>
            <person name="Huson D.H."/>
            <person name="Kravitz S.A."/>
            <person name="Mouchard L."/>
            <person name="Reinert K."/>
            <person name="Remington K.A."/>
            <person name="Clark A.G."/>
            <person name="Waterman M.S."/>
            <person name="Eichler E.E."/>
            <person name="Adams M.D."/>
            <person name="Hunkapiller M.W."/>
            <person name="Myers E.W."/>
            <person name="Venter J.C."/>
        </authorList>
    </citation>
    <scope>NUCLEOTIDE SEQUENCE [LARGE SCALE GENOMIC DNA]</scope>
</reference>
<reference key="6">
    <citation type="journal article" date="2004" name="Genome Res.">
        <title>The status, quality, and expansion of the NIH full-length cDNA project: the Mammalian Gene Collection (MGC).</title>
        <authorList>
            <consortium name="The MGC Project Team"/>
        </authorList>
    </citation>
    <scope>NUCLEOTIDE SEQUENCE [LARGE SCALE MRNA]</scope>
    <source>
        <tissue>Brain</tissue>
    </source>
</reference>
<reference key="7">
    <citation type="journal article" date="2006" name="J. Biol. Chem.">
        <title>Sterol-regulated degradation of Insig-1 mediated by the membrane-bound ubiquitin ligase gp78.</title>
        <authorList>
            <person name="Lee J.N."/>
            <person name="Song B."/>
            <person name="DeBose-Boyd R.A."/>
            <person name="Ye J."/>
        </authorList>
    </citation>
    <scope>MUTAGENESIS OF GLU-214</scope>
</reference>
<reference key="8">
    <citation type="journal article" date="2006" name="Proc. Natl. Acad. Sci. U.S.A.">
        <title>Juxtamembranous aspartic acid in Insig-1 and Insig-2 is required for cholesterol homeostasis.</title>
        <authorList>
            <person name="Gong Y."/>
            <person name="Lee J.N."/>
            <person name="Brown M.S."/>
            <person name="Goldstein J.L."/>
            <person name="Ye J."/>
        </authorList>
    </citation>
    <scope>FUNCTION</scope>
    <scope>MUTAGENESIS OF ASP-149</scope>
</reference>
<reference key="9">
    <citation type="journal article" date="2007" name="Proc. Natl. Acad. Sci. U.S.A.">
        <title>Sterol-regulated transport of SREBPs from endoplasmic reticulum to Golgi: oxysterols block transport by binding to Insig.</title>
        <authorList>
            <person name="Radhakrishnan A."/>
            <person name="Ikeda Y."/>
            <person name="Kwon H.J."/>
            <person name="Brown M.S."/>
            <person name="Goldstein J.L."/>
        </authorList>
    </citation>
    <scope>FUNCTION</scope>
    <scope>INTERACTION WITH SCAP</scope>
    <scope>LIPID-BINDING</scope>
    <scope>DOMAIN</scope>
    <scope>MUTAGENESIS OF PHE-115; GLN-132; THR-136; TRP-145 AND ASP-149</scope>
</reference>
<reference key="10">
    <citation type="journal article" date="2010" name="Mol. Cancer Res.">
        <title>The TRC8 ubiquitin ligase is sterol regulated and interacts with lipid and protein biosynthetic pathways.</title>
        <authorList>
            <person name="Lee J.P."/>
            <person name="Brauweiler A."/>
            <person name="Rudolph M."/>
            <person name="Hooper J.E."/>
            <person name="Drabkin H.A."/>
            <person name="Gemmill R.M."/>
        </authorList>
    </citation>
    <scope>INTERACTION WITH RNF139</scope>
</reference>
<reference key="11">
    <citation type="journal article" date="2015" name="Science">
        <title>Crystal structure of a mycobacterial Insig homolog provides insight into how these sensors monitor sterol levels.</title>
        <authorList>
            <person name="Ren R."/>
            <person name="Zhou X."/>
            <person name="He Y."/>
            <person name="Ke M."/>
            <person name="Wu J."/>
            <person name="Liu X."/>
            <person name="Yan C."/>
            <person name="Wu Y."/>
            <person name="Gong X."/>
            <person name="Lei X."/>
            <person name="Yan S.F."/>
            <person name="Radhakrishnan A."/>
            <person name="Yan N."/>
        </authorList>
    </citation>
    <scope>FUNCTION</scope>
    <scope>LIPID-BINDING</scope>
    <scope>INTERACTION WITH SCAP</scope>
    <scope>DOMAIN</scope>
    <scope>MUTAGENESIS OF GLY-39; CYS-77; ALA-113; VAL-114; PHE-115; VAL-116; GLY-117; HIS-120; GLN-132; TRP-145; ASP-149 AND GLY-200</scope>
</reference>
<reference key="12">
    <citation type="journal article" date="2011" name="Proc. Natl. Acad. Sci. U.S.A.">
        <title>Sterol-induced degradation of HMG CoA reductase depends on interplay of two Insigs and two ubiquitin ligases, gp78 and Trc8.</title>
        <authorList>
            <person name="Jo Y."/>
            <person name="Lee P.C."/>
            <person name="Sguigna P.V."/>
            <person name="DeBose-Boyd R.A."/>
        </authorList>
    </citation>
    <scope>FUNCTION</scope>
    <scope>INTERACTION WITH RNF139</scope>
</reference>
<reference key="13">
    <citation type="journal article" date="2017" name="Nat. Rev. Endocrinol.">
        <title>SREBP-regulated lipid metabolism: convergent physiology - divergent pathophysiology.</title>
        <authorList>
            <person name="Shimano H."/>
            <person name="Sato R."/>
        </authorList>
    </citation>
    <scope>REVIEW</scope>
</reference>
<reference key="14">
    <citation type="journal article" date="2018" name="J. Biol. Chem.">
        <title>Ring finger protein 145 (RNF145) is a ubiquitin ligase for sterol-induced degradation of HMG-CoA reductase.</title>
        <authorList>
            <person name="Jiang L.Y."/>
            <person name="Jiang W."/>
            <person name="Tian N."/>
            <person name="Xiong Y.N."/>
            <person name="Liu J."/>
            <person name="Wei J."/>
            <person name="Wu K.Y."/>
            <person name="Luo J."/>
            <person name="Shi X.J."/>
            <person name="Song B.L."/>
        </authorList>
    </citation>
    <scope>INTERACTION WITH RNF145</scope>
</reference>
<reference key="15">
    <citation type="journal article" date="2020" name="Nature">
        <title>The gluconeogenic enzyme PCK1 phosphorylates INSIG1/2 for lipogenesis.</title>
        <authorList>
            <person name="Xu D."/>
            <person name="Wang Z."/>
            <person name="Xia Y."/>
            <person name="Shao F."/>
            <person name="Xia W."/>
            <person name="Wei Y."/>
            <person name="Li X."/>
            <person name="Qian X."/>
            <person name="Lee J.H."/>
            <person name="Du L."/>
            <person name="Zheng Y."/>
            <person name="Lv G."/>
            <person name="Leu J.S."/>
            <person name="Wang H."/>
            <person name="Xing D."/>
            <person name="Liang T."/>
            <person name="Hung M.C."/>
            <person name="Lu Z."/>
        </authorList>
    </citation>
    <scope>FUNCTION</scope>
    <scope>LIPID-BINDING</scope>
    <scope>SUBCELLULAR LOCATION</scope>
    <scope>INTERACTION WITH SCAP</scope>
    <scope>PHOSPHORYLATION AT SER-151</scope>
    <scope>MUTAGENESIS OF SER-151</scope>
</reference>
<reference key="16">
    <citation type="journal article" date="2020" name="Nat. Commun.">
        <title>Competitive oxidation and ubiquitylation on the evolutionarily conserved cysteine confer tissue-specific stabilization of Insig-2.</title>
        <authorList>
            <person name="Zhou Z.S."/>
            <person name="Li M.X."/>
            <person name="Liu J."/>
            <person name="Jiao H."/>
            <person name="Xia J.M."/>
            <person name="Shi X.J."/>
            <person name="Zhao H."/>
            <person name="Chu L."/>
            <person name="Liu J."/>
            <person name="Qi W."/>
            <person name="Luo J."/>
            <person name="Song B.L."/>
        </authorList>
    </citation>
    <scope>UBIQUITINATION AT CYS-215</scope>
    <scope>OXIDATION AT CYS-215</scope>
    <scope>MUTAGENESIS OF 100-LYS--LYS-102 AND CYS-215</scope>
</reference>
<reference key="17">
    <citation type="journal article" date="2013" name="EMBO J.">
        <title>Rules for the recognition of dilysine retrieval motifs by coatomer.</title>
        <authorList>
            <person name="Ma W."/>
            <person name="Goldberg J."/>
        </authorList>
    </citation>
    <scope>X-RAY CRYSTALLOGRAPHY (1.46 ANGSTROMS) OF 221-225</scope>
    <scope>DOMAIN</scope>
</reference>
<gene>
    <name evidence="13 15" type="primary">INSIG2</name>
</gene>
<evidence type="ECO:0000250" key="1">
    <source>
        <dbReference type="UniProtKB" id="A1T557"/>
    </source>
</evidence>
<evidence type="ECO:0000269" key="2">
    <source>
    </source>
</evidence>
<evidence type="ECO:0000269" key="3">
    <source>
    </source>
</evidence>
<evidence type="ECO:0000269" key="4">
    <source>
    </source>
</evidence>
<evidence type="ECO:0000269" key="5">
    <source>
    </source>
</evidence>
<evidence type="ECO:0000269" key="6">
    <source>
    </source>
</evidence>
<evidence type="ECO:0000269" key="7">
    <source>
    </source>
</evidence>
<evidence type="ECO:0000269" key="8">
    <source>
    </source>
</evidence>
<evidence type="ECO:0000269" key="9">
    <source>
    </source>
</evidence>
<evidence type="ECO:0000269" key="10">
    <source>
    </source>
</evidence>
<evidence type="ECO:0000269" key="11">
    <source>
    </source>
</evidence>
<evidence type="ECO:0000269" key="12">
    <source>
    </source>
</evidence>
<evidence type="ECO:0000303" key="13">
    <source>
    </source>
</evidence>
<evidence type="ECO:0000305" key="14"/>
<evidence type="ECO:0000312" key="15">
    <source>
        <dbReference type="HGNC" id="HGNC:20452"/>
    </source>
</evidence>
<keyword id="KW-0002">3D-structure</keyword>
<keyword id="KW-0153">Cholesterol metabolism</keyword>
<keyword id="KW-0256">Endoplasmic reticulum</keyword>
<keyword id="KW-0443">Lipid metabolism</keyword>
<keyword id="KW-0446">Lipid-binding</keyword>
<keyword id="KW-0472">Membrane</keyword>
<keyword id="KW-0558">Oxidation</keyword>
<keyword id="KW-0597">Phosphoprotein</keyword>
<keyword id="KW-1267">Proteomics identification</keyword>
<keyword id="KW-1185">Reference proteome</keyword>
<keyword id="KW-0753">Steroid metabolism</keyword>
<keyword id="KW-1207">Sterol metabolism</keyword>
<keyword id="KW-0882">Thioester bond</keyword>
<keyword id="KW-0812">Transmembrane</keyword>
<keyword id="KW-1133">Transmembrane helix</keyword>
<keyword id="KW-0832">Ubl conjugation</keyword>
<organism>
    <name type="scientific">Homo sapiens</name>
    <name type="common">Human</name>
    <dbReference type="NCBI Taxonomy" id="9606"/>
    <lineage>
        <taxon>Eukaryota</taxon>
        <taxon>Metazoa</taxon>
        <taxon>Chordata</taxon>
        <taxon>Craniata</taxon>
        <taxon>Vertebrata</taxon>
        <taxon>Euteleostomi</taxon>
        <taxon>Mammalia</taxon>
        <taxon>Eutheria</taxon>
        <taxon>Euarchontoglires</taxon>
        <taxon>Primates</taxon>
        <taxon>Haplorrhini</taxon>
        <taxon>Catarrhini</taxon>
        <taxon>Hominidae</taxon>
        <taxon>Homo</taxon>
    </lineage>
</organism>
<proteinExistence type="evidence at protein level"/>
<protein>
    <recommendedName>
        <fullName evidence="13">Insulin-induced gene 2 protein</fullName>
        <shortName evidence="13">INSIG-2</shortName>
    </recommendedName>
</protein>
<feature type="chain" id="PRO_0000286797" description="Insulin-induced gene 2 protein">
    <location>
        <begin position="1"/>
        <end position="225"/>
    </location>
</feature>
<feature type="topological domain" description="Cytoplasmic" evidence="14">
    <location>
        <begin position="1"/>
        <end position="28"/>
    </location>
</feature>
<feature type="transmembrane region" description="Helical; Name=1" evidence="1">
    <location>
        <begin position="29"/>
        <end position="51"/>
    </location>
</feature>
<feature type="topological domain" description="Lumenal" evidence="14">
    <location>
        <begin position="52"/>
        <end position="70"/>
    </location>
</feature>
<feature type="transmembrane region" description="Helical; Name=2" evidence="1">
    <location>
        <begin position="71"/>
        <end position="88"/>
    </location>
</feature>
<feature type="topological domain" description="Cytoplasmic" evidence="14">
    <location>
        <begin position="89"/>
        <end position="103"/>
    </location>
</feature>
<feature type="transmembrane region" description="Helical; Name=3" evidence="1">
    <location>
        <begin position="104"/>
        <end position="126"/>
    </location>
</feature>
<feature type="topological domain" description="Lumenal" evidence="14">
    <location>
        <begin position="127"/>
        <end position="129"/>
    </location>
</feature>
<feature type="transmembrane region" description="Helical; Name=4" evidence="1">
    <location>
        <begin position="130"/>
        <end position="148"/>
    </location>
</feature>
<feature type="topological domain" description="Cytoplasmic" evidence="14">
    <location>
        <begin position="149"/>
        <end position="153"/>
    </location>
</feature>
<feature type="transmembrane region" description="Helical; Name=5" evidence="1">
    <location>
        <begin position="154"/>
        <end position="175"/>
    </location>
</feature>
<feature type="topological domain" description="Lumenal" evidence="14">
    <location>
        <begin position="176"/>
        <end position="189"/>
    </location>
</feature>
<feature type="transmembrane region" description="Helical; Name=6" evidence="1">
    <location>
        <begin position="190"/>
        <end position="207"/>
    </location>
</feature>
<feature type="topological domain" description="Cytoplasmic" evidence="14">
    <location>
        <begin position="208"/>
        <end position="225"/>
    </location>
</feature>
<feature type="short sequence motif" description="KxHxx" evidence="8">
    <location>
        <begin position="219"/>
        <end position="225"/>
    </location>
</feature>
<feature type="site" description="Required for the recognition of 25-hydroxycholesterol" evidence="5">
    <location>
        <position position="115"/>
    </location>
</feature>
<feature type="modified residue" description="Phosphoserine; by PCK1" evidence="12">
    <location>
        <position position="151"/>
    </location>
</feature>
<feature type="modified residue" description="Cysteine sulfenic acid (-SOH); alternate" evidence="11">
    <location>
        <position position="215"/>
    </location>
</feature>
<feature type="cross-link" description="Glycyl cysteine thioester (Cys-Gly) (interchain with G-Cter in ubiquitin); alternate" evidence="11">
    <location>
        <position position="215"/>
    </location>
</feature>
<feature type="mutagenesis site" description="Decreased binding to 25-hydroxycholesterol, leading to decreased interaction with SCAP." evidence="9">
    <original>G</original>
    <variation>F</variation>
    <location>
        <position position="39"/>
    </location>
</feature>
<feature type="mutagenesis site" description="Decreased binding to 25-hydroxycholesterol, leading to decreased interaction with SCAP." evidence="9">
    <original>C</original>
    <variation>D</variation>
    <location>
        <position position="77"/>
    </location>
</feature>
<feature type="mutagenesis site" description="Does not affect degradation of the protein." evidence="11">
    <original>KFK</original>
    <variation>RFR</variation>
    <location>
        <begin position="100"/>
        <end position="102"/>
    </location>
</feature>
<feature type="mutagenesis site" description="Abolished interaction with SCAP even in the presence of 25-hydroxycholesterol." evidence="9">
    <original>A</original>
    <variation>W</variation>
    <location>
        <position position="113"/>
    </location>
</feature>
<feature type="mutagenesis site" description="Does not affect interaction with SCAP." evidence="9">
    <original>V</original>
    <variation>F</variation>
    <location>
        <position position="114"/>
    </location>
</feature>
<feature type="mutagenesis site" description="Decreased binding to 25-hydroxycholesterol and subsequent interaction with SCAP." evidence="5 9">
    <original>F</original>
    <variation>A</variation>
    <location>
        <position position="115"/>
    </location>
</feature>
<feature type="mutagenesis site" description="Does not affect interaction with SCAP." evidence="9">
    <original>V</original>
    <variation>F</variation>
    <location>
        <position position="116"/>
    </location>
</feature>
<feature type="mutagenesis site" description="Abolished interaction with SCAP even in the presence of 25-hydroxycholesterol." evidence="9">
    <original>G</original>
    <variation>F</variation>
    <location>
        <position position="117"/>
    </location>
</feature>
<feature type="mutagenesis site" description="Abolished interaction with SCAP even in the presence of 25-hydroxycholesterol." evidence="9">
    <original>H</original>
    <variation>F</variation>
    <location>
        <position position="120"/>
    </location>
</feature>
<feature type="mutagenesis site" description="Abolished interaction with SCAP without affecting binding to 25-hydroxycholesterol." evidence="5 9">
    <original>Q</original>
    <variation>A</variation>
    <location>
        <position position="132"/>
    </location>
</feature>
<feature type="mutagenesis site" description="Decreased binding to 25-hydroxycholesterol and subsequent interaction with SCAP." evidence="5">
    <original>T</original>
    <variation>A</variation>
    <location>
        <position position="136"/>
    </location>
</feature>
<feature type="mutagenesis site" description="Abolished interaction with SCAP without affecting binding to 25-hydroxycholesterol." evidence="5 9">
    <original>W</original>
    <variation>A</variation>
    <location>
        <position position="145"/>
    </location>
</feature>
<feature type="mutagenesis site" description="Loss of ability to suppress the cleavage of SREBP2 and to accelerate the degradation of HMGCR. Abolished interaction with SCAP without affecting binding to 25-hydroxycholesterol." evidence="3 5 9">
    <original>D</original>
    <variation>A</variation>
    <location>
        <position position="149"/>
    </location>
</feature>
<feature type="mutagenesis site" description="Abolished phosphorylation by PCK1, does not affect oxysterol-binding, does not affect the interaction with SCAP." evidence="12">
    <original>S</original>
    <variation>A</variation>
    <location>
        <position position="151"/>
    </location>
</feature>
<feature type="mutagenesis site" description="Phosphomimetic mutant, reduced binding to oxysterol." evidence="12">
    <original>S</original>
    <variation>E</variation>
    <location>
        <position position="151"/>
    </location>
</feature>
<feature type="mutagenesis site" description="Decreased binding to 25-hydroxycholesterol, leading to decreased interaction with SCAP." evidence="9">
    <original>G</original>
    <variation>F</variation>
    <location>
        <position position="200"/>
    </location>
</feature>
<feature type="mutagenesis site" description="Promotes ubiquitination by AMFR/gp78, which does not take place normally." evidence="4">
    <original>E</original>
    <variation>A</variation>
    <location>
        <position position="214"/>
    </location>
</feature>
<feature type="mutagenesis site" description="Prevents degradation because of impaired ubiquitination." evidence="11">
    <original>C</original>
    <variation>A</variation>
    <location>
        <position position="215"/>
    </location>
</feature>
<dbReference type="EMBL" id="AF527632">
    <property type="protein sequence ID" value="AAN28333.1"/>
    <property type="molecule type" value="mRNA"/>
</dbReference>
<dbReference type="EMBL" id="AF125392">
    <property type="protein sequence ID" value="AAD43048.1"/>
    <property type="status" value="ALT_FRAME"/>
    <property type="molecule type" value="mRNA"/>
</dbReference>
<dbReference type="EMBL" id="AK291433">
    <property type="protein sequence ID" value="BAF84122.1"/>
    <property type="molecule type" value="mRNA"/>
</dbReference>
<dbReference type="EMBL" id="AC009303">
    <property type="protein sequence ID" value="AAX93280.1"/>
    <property type="molecule type" value="Genomic_DNA"/>
</dbReference>
<dbReference type="EMBL" id="CH471103">
    <property type="protein sequence ID" value="EAW95199.1"/>
    <property type="molecule type" value="Genomic_DNA"/>
</dbReference>
<dbReference type="EMBL" id="BC022475">
    <property type="protein sequence ID" value="AAH22475.1"/>
    <property type="molecule type" value="mRNA"/>
</dbReference>
<dbReference type="CCDS" id="CCDS2122.1"/>
<dbReference type="RefSeq" id="NP_001308258.1">
    <property type="nucleotide sequence ID" value="NM_001321329.2"/>
</dbReference>
<dbReference type="RefSeq" id="NP_001308259.1">
    <property type="nucleotide sequence ID" value="NM_001321330.1"/>
</dbReference>
<dbReference type="RefSeq" id="NP_001308260.1">
    <property type="nucleotide sequence ID" value="NM_001321331.1"/>
</dbReference>
<dbReference type="RefSeq" id="NP_001308261.1">
    <property type="nucleotide sequence ID" value="NM_001321332.1"/>
</dbReference>
<dbReference type="RefSeq" id="NP_001308262.1">
    <property type="nucleotide sequence ID" value="NM_001321333.1"/>
</dbReference>
<dbReference type="RefSeq" id="NP_057217.2">
    <property type="nucleotide sequence ID" value="NM_016133.3"/>
</dbReference>
<dbReference type="RefSeq" id="XP_047300596.1">
    <property type="nucleotide sequence ID" value="XM_047444640.1"/>
</dbReference>
<dbReference type="RefSeq" id="XP_054198379.1">
    <property type="nucleotide sequence ID" value="XM_054342404.1"/>
</dbReference>
<dbReference type="RefSeq" id="XP_054198380.1">
    <property type="nucleotide sequence ID" value="XM_054342405.1"/>
</dbReference>
<dbReference type="PDB" id="4J82">
    <property type="method" value="X-ray"/>
    <property type="resolution" value="1.46 A"/>
    <property type="chains" value="C/D=221-225"/>
</dbReference>
<dbReference type="PDB" id="6M49">
    <property type="method" value="EM"/>
    <property type="resolution" value="3.70 A"/>
    <property type="chains" value="A=1-225"/>
</dbReference>
<dbReference type="PDB" id="7ETW">
    <property type="method" value="EM"/>
    <property type="resolution" value="4.10 A"/>
    <property type="chains" value="A=1-225"/>
</dbReference>
<dbReference type="PDBsum" id="4J82"/>
<dbReference type="PDBsum" id="6M49"/>
<dbReference type="PDBsum" id="7ETW"/>
<dbReference type="EMDB" id="EMD-30074"/>
<dbReference type="EMDB" id="EMD-31303"/>
<dbReference type="SMR" id="Q9Y5U4"/>
<dbReference type="BioGRID" id="119325">
    <property type="interactions" value="178"/>
</dbReference>
<dbReference type="ComplexPortal" id="CPX-25748">
    <property type="entry name" value="SREBP-SCAP-INSIG sequestering complex, INSIG2-SREBF2 variant"/>
</dbReference>
<dbReference type="ComplexPortal" id="CPX-25749">
    <property type="entry name" value="SREBP-SCAP-INSIG sequestering complex, INSIG2-SREBF1 variant"/>
</dbReference>
<dbReference type="CORUM" id="Q9Y5U4"/>
<dbReference type="DIP" id="DIP-60913N"/>
<dbReference type="FunCoup" id="Q9Y5U4">
    <property type="interactions" value="731"/>
</dbReference>
<dbReference type="IntAct" id="Q9Y5U4">
    <property type="interactions" value="43"/>
</dbReference>
<dbReference type="MINT" id="Q9Y5U4"/>
<dbReference type="STRING" id="9606.ENSP00000245787"/>
<dbReference type="TCDB" id="9.B.418.1.1">
    <property type="family name" value="the insulin-induced gene 1 &amp; 2 protein (insig) family"/>
</dbReference>
<dbReference type="iPTMnet" id="Q9Y5U4"/>
<dbReference type="PhosphoSitePlus" id="Q9Y5U4"/>
<dbReference type="BioMuta" id="INSIG2"/>
<dbReference type="DMDM" id="147646722"/>
<dbReference type="jPOST" id="Q9Y5U4"/>
<dbReference type="MassIVE" id="Q9Y5U4"/>
<dbReference type="PaxDb" id="9606-ENSP00000245787"/>
<dbReference type="PeptideAtlas" id="Q9Y5U4"/>
<dbReference type="ProteomicsDB" id="86507"/>
<dbReference type="Antibodypedia" id="55566">
    <property type="antibodies" value="117 antibodies from 26 providers"/>
</dbReference>
<dbReference type="DNASU" id="51141"/>
<dbReference type="Ensembl" id="ENST00000245787.9">
    <property type="protein sequence ID" value="ENSP00000245787.4"/>
    <property type="gene ID" value="ENSG00000125629.16"/>
</dbReference>
<dbReference type="GeneID" id="51141"/>
<dbReference type="KEGG" id="hsa:51141"/>
<dbReference type="MANE-Select" id="ENST00000245787.9">
    <property type="protein sequence ID" value="ENSP00000245787.4"/>
    <property type="RefSeq nucleotide sequence ID" value="NM_016133.4"/>
    <property type="RefSeq protein sequence ID" value="NP_057217.2"/>
</dbReference>
<dbReference type="UCSC" id="uc002tlk.4">
    <property type="organism name" value="human"/>
</dbReference>
<dbReference type="AGR" id="HGNC:20452"/>
<dbReference type="CTD" id="51141"/>
<dbReference type="DisGeNET" id="51141"/>
<dbReference type="GeneCards" id="INSIG2"/>
<dbReference type="HGNC" id="HGNC:20452">
    <property type="gene designation" value="INSIG2"/>
</dbReference>
<dbReference type="HPA" id="ENSG00000125629">
    <property type="expression patterns" value="Low tissue specificity"/>
</dbReference>
<dbReference type="MIM" id="608660">
    <property type="type" value="gene"/>
</dbReference>
<dbReference type="neXtProt" id="NX_Q9Y5U4"/>
<dbReference type="OpenTargets" id="ENSG00000125629"/>
<dbReference type="PharmGKB" id="PA134890284"/>
<dbReference type="VEuPathDB" id="HostDB:ENSG00000125629"/>
<dbReference type="eggNOG" id="KOG4363">
    <property type="taxonomic scope" value="Eukaryota"/>
</dbReference>
<dbReference type="GeneTree" id="ENSGT00580000081600"/>
<dbReference type="HOGENOM" id="CLU_092922_0_0_1"/>
<dbReference type="InParanoid" id="Q9Y5U4"/>
<dbReference type="OMA" id="SKKCGPY"/>
<dbReference type="OrthoDB" id="205546at2759"/>
<dbReference type="PAN-GO" id="Q9Y5U4">
    <property type="GO annotations" value="6 GO annotations based on evolutionary models"/>
</dbReference>
<dbReference type="PhylomeDB" id="Q9Y5U4"/>
<dbReference type="TreeFam" id="TF331013"/>
<dbReference type="PathwayCommons" id="Q9Y5U4"/>
<dbReference type="Reactome" id="R-HSA-1655829">
    <property type="pathway name" value="Regulation of cholesterol biosynthesis by SREBP (SREBF)"/>
</dbReference>
<dbReference type="SignaLink" id="Q9Y5U4"/>
<dbReference type="SIGNOR" id="Q9Y5U4"/>
<dbReference type="BioGRID-ORCS" id="51141">
    <property type="hits" value="14 hits in 1155 CRISPR screens"/>
</dbReference>
<dbReference type="ChiTaRS" id="INSIG2">
    <property type="organism name" value="human"/>
</dbReference>
<dbReference type="EvolutionaryTrace" id="Q9Y5U4"/>
<dbReference type="GeneWiki" id="INSIG2"/>
<dbReference type="GenomeRNAi" id="51141"/>
<dbReference type="Pharos" id="Q9Y5U4">
    <property type="development level" value="Tbio"/>
</dbReference>
<dbReference type="PRO" id="PR:Q9Y5U4"/>
<dbReference type="Proteomes" id="UP000005640">
    <property type="component" value="Chromosome 2"/>
</dbReference>
<dbReference type="RNAct" id="Q9Y5U4">
    <property type="molecule type" value="protein"/>
</dbReference>
<dbReference type="Bgee" id="ENSG00000125629">
    <property type="expression patterns" value="Expressed in right coronary artery and 202 other cell types or tissues"/>
</dbReference>
<dbReference type="ExpressionAtlas" id="Q9Y5U4">
    <property type="expression patterns" value="baseline and differential"/>
</dbReference>
<dbReference type="GO" id="GO:0005783">
    <property type="term" value="C:endoplasmic reticulum"/>
    <property type="evidence" value="ECO:0000314"/>
    <property type="project" value="UniProtKB"/>
</dbReference>
<dbReference type="GO" id="GO:0005789">
    <property type="term" value="C:endoplasmic reticulum membrane"/>
    <property type="evidence" value="ECO:0000314"/>
    <property type="project" value="UniProt"/>
</dbReference>
<dbReference type="GO" id="GO:0032937">
    <property type="term" value="C:SREBP-SCAP-Insig complex"/>
    <property type="evidence" value="ECO:0000314"/>
    <property type="project" value="UniProtKB"/>
</dbReference>
<dbReference type="GO" id="GO:0008142">
    <property type="term" value="F:oxysterol binding"/>
    <property type="evidence" value="ECO:0000314"/>
    <property type="project" value="UniProtKB"/>
</dbReference>
<dbReference type="GO" id="GO:0140311">
    <property type="term" value="F:protein sequestering activity"/>
    <property type="evidence" value="ECO:0000314"/>
    <property type="project" value="UniProt"/>
</dbReference>
<dbReference type="GO" id="GO:0032869">
    <property type="term" value="P:cellular response to insulin stimulus"/>
    <property type="evidence" value="ECO:0000318"/>
    <property type="project" value="GO_Central"/>
</dbReference>
<dbReference type="GO" id="GO:0006695">
    <property type="term" value="P:cholesterol biosynthetic process"/>
    <property type="evidence" value="ECO:0000314"/>
    <property type="project" value="UniProtKB"/>
</dbReference>
<dbReference type="GO" id="GO:0060363">
    <property type="term" value="P:cranial suture morphogenesis"/>
    <property type="evidence" value="ECO:0007669"/>
    <property type="project" value="Ensembl"/>
</dbReference>
<dbReference type="GO" id="GO:0042472">
    <property type="term" value="P:inner ear morphogenesis"/>
    <property type="evidence" value="ECO:0007669"/>
    <property type="project" value="Ensembl"/>
</dbReference>
<dbReference type="GO" id="GO:0042474">
    <property type="term" value="P:middle ear morphogenesis"/>
    <property type="evidence" value="ECO:0007669"/>
    <property type="project" value="Ensembl"/>
</dbReference>
<dbReference type="GO" id="GO:0045717">
    <property type="term" value="P:negative regulation of fatty acid biosynthetic process"/>
    <property type="evidence" value="ECO:0007669"/>
    <property type="project" value="Ensembl"/>
</dbReference>
<dbReference type="GO" id="GO:0010894">
    <property type="term" value="P:negative regulation of steroid biosynthetic process"/>
    <property type="evidence" value="ECO:0007669"/>
    <property type="project" value="Ensembl"/>
</dbReference>
<dbReference type="GO" id="GO:0070542">
    <property type="term" value="P:response to fatty acid"/>
    <property type="evidence" value="ECO:0007669"/>
    <property type="project" value="Ensembl"/>
</dbReference>
<dbReference type="GO" id="GO:0060021">
    <property type="term" value="P:roof of mouth development"/>
    <property type="evidence" value="ECO:0007669"/>
    <property type="project" value="Ensembl"/>
</dbReference>
<dbReference type="GO" id="GO:0032933">
    <property type="term" value="P:SREBP signaling pathway"/>
    <property type="evidence" value="ECO:0000314"/>
    <property type="project" value="UniProtKB"/>
</dbReference>
<dbReference type="GO" id="GO:0036316">
    <property type="term" value="P:SREBP-SCAP complex retention in endoplasmic reticulum"/>
    <property type="evidence" value="ECO:0000314"/>
    <property type="project" value="UniProtKB"/>
</dbReference>
<dbReference type="GO" id="GO:0006641">
    <property type="term" value="P:triglyceride metabolic process"/>
    <property type="evidence" value="ECO:0007669"/>
    <property type="project" value="Ensembl"/>
</dbReference>
<dbReference type="InterPro" id="IPR025929">
    <property type="entry name" value="INSIG_fam"/>
</dbReference>
<dbReference type="PANTHER" id="PTHR15301">
    <property type="entry name" value="INSULIN-INDUCED GENE 1"/>
    <property type="match status" value="1"/>
</dbReference>
<dbReference type="PANTHER" id="PTHR15301:SF10">
    <property type="entry name" value="INSULIN-INDUCED GENE 2 PROTEIN"/>
    <property type="match status" value="1"/>
</dbReference>
<dbReference type="Pfam" id="PF07281">
    <property type="entry name" value="INSIG"/>
    <property type="match status" value="1"/>
</dbReference>
<name>INSI2_HUMAN</name>